<reference key="1">
    <citation type="journal article" date="2002" name="J. Immunol.">
        <title>Dendritic cell-associated lectin-1: a novel dendritic cell-associated, C-type lectin-like molecule enhances T cell secretion of IL-4.</title>
        <authorList>
            <person name="Ryan E.J."/>
            <person name="Marshall A.J."/>
            <person name="Magaletti D."/>
            <person name="Floyd H."/>
            <person name="Draves K.E."/>
            <person name="Olson N.E."/>
            <person name="Clark E.A."/>
        </authorList>
    </citation>
    <scope>NUCLEOTIDE SEQUENCE [MRNA]</scope>
    <scope>FUNCTION</scope>
    <scope>SUBCELLULAR LOCATION</scope>
    <scope>TISSUE SPECIFICITY</scope>
    <source>
        <tissue>B-cell</tissue>
    </source>
</reference>
<reference key="2">
    <citation type="journal article" date="2004" name="Genome Res.">
        <title>The status, quality, and expansion of the NIH full-length cDNA project: the Mammalian Gene Collection (MGC).</title>
        <authorList>
            <consortium name="The MGC Project Team"/>
        </authorList>
    </citation>
    <scope>NUCLEOTIDE SEQUENCE [LARGE SCALE MRNA]</scope>
    <source>
        <tissue>Brain</tissue>
    </source>
</reference>
<dbReference type="EMBL" id="AF518873">
    <property type="protein sequence ID" value="AAN64752.1"/>
    <property type="molecule type" value="mRNA"/>
</dbReference>
<dbReference type="EMBL" id="BC093857">
    <property type="protein sequence ID" value="AAH93857.1"/>
    <property type="molecule type" value="mRNA"/>
</dbReference>
<dbReference type="EMBL" id="BC093859">
    <property type="protein sequence ID" value="AAH93859.1"/>
    <property type="molecule type" value="mRNA"/>
</dbReference>
<dbReference type="RefSeq" id="NP_001240679.1">
    <property type="nucleotide sequence ID" value="NM_001253750.1"/>
</dbReference>
<dbReference type="RefSeq" id="NP_001254630.1">
    <property type="nucleotide sequence ID" value="NM_001267701.1"/>
</dbReference>
<dbReference type="RefSeq" id="NP_742001.1">
    <property type="nucleotide sequence ID" value="NM_172004.3"/>
</dbReference>
<dbReference type="SMR" id="Q8IZS7"/>
<dbReference type="BioGRID" id="127755">
    <property type="interactions" value="1"/>
</dbReference>
<dbReference type="STRING" id="9606.ENSP00000483624"/>
<dbReference type="GlyCosmos" id="Q8IZS7">
    <property type="glycosylation" value="3 sites, No reported glycans"/>
</dbReference>
<dbReference type="GlyGen" id="Q8IZS7">
    <property type="glycosylation" value="3 sites"/>
</dbReference>
<dbReference type="iPTMnet" id="Q8IZS7"/>
<dbReference type="PhosphoSitePlus" id="Q8IZS7"/>
<dbReference type="BioMuta" id="CLECL1"/>
<dbReference type="DMDM" id="74728443"/>
<dbReference type="PaxDb" id="9606-ENSP00000483624"/>
<dbReference type="Antibodypedia" id="53007">
    <property type="antibodies" value="56 antibodies from 18 providers"/>
</dbReference>
<dbReference type="DNASU" id="160365"/>
<dbReference type="UCSC" id="uc001qwj.4">
    <property type="organism name" value="human"/>
</dbReference>
<dbReference type="AGR" id="HGNC:24462"/>
<dbReference type="DisGeNET" id="160365"/>
<dbReference type="GeneCards" id="CLECL1P"/>
<dbReference type="HGNC" id="HGNC:24462">
    <property type="gene designation" value="CLECL1P"/>
</dbReference>
<dbReference type="MIM" id="607467">
    <property type="type" value="gene"/>
</dbReference>
<dbReference type="neXtProt" id="NX_Q8IZS7"/>
<dbReference type="PharmGKB" id="PA162382341"/>
<dbReference type="VEuPathDB" id="HostDB:ENSG00000184293"/>
<dbReference type="eggNOG" id="KOG4297">
    <property type="taxonomic scope" value="Eukaryota"/>
</dbReference>
<dbReference type="HOGENOM" id="CLU_1660173_0_0_1"/>
<dbReference type="InParanoid" id="Q8IZS7"/>
<dbReference type="PAN-GO" id="Q8IZS7">
    <property type="GO annotations" value="4 GO annotations based on evolutionary models"/>
</dbReference>
<dbReference type="PhylomeDB" id="Q8IZS7"/>
<dbReference type="TreeFam" id="TF342285"/>
<dbReference type="PathwayCommons" id="Q8IZS7"/>
<dbReference type="SignaLink" id="Q8IZS7"/>
<dbReference type="BioGRID-ORCS" id="160365">
    <property type="hits" value="17 hits in 1142 CRISPR screens"/>
</dbReference>
<dbReference type="GenomeRNAi" id="160365"/>
<dbReference type="Pharos" id="Q8IZS7">
    <property type="development level" value="Tbio"/>
</dbReference>
<dbReference type="PRO" id="PR:Q8IZS7"/>
<dbReference type="Proteomes" id="UP000005640">
    <property type="component" value="Chromosome 12"/>
</dbReference>
<dbReference type="RNAct" id="Q8IZS7">
    <property type="molecule type" value="protein"/>
</dbReference>
<dbReference type="Bgee" id="ENSG00000184293">
    <property type="expression patterns" value="Expressed in tendon of biceps brachii and 154 other cell types or tissues"/>
</dbReference>
<dbReference type="ExpressionAtlas" id="Q8IZS7">
    <property type="expression patterns" value="baseline and differential"/>
</dbReference>
<dbReference type="GO" id="GO:0005886">
    <property type="term" value="C:plasma membrane"/>
    <property type="evidence" value="ECO:0000314"/>
    <property type="project" value="UniProtKB"/>
</dbReference>
<dbReference type="GO" id="GO:0030246">
    <property type="term" value="F:carbohydrate binding"/>
    <property type="evidence" value="ECO:0007669"/>
    <property type="project" value="UniProtKB-KW"/>
</dbReference>
<dbReference type="GO" id="GO:0097323">
    <property type="term" value="P:B cell adhesion"/>
    <property type="evidence" value="ECO:0000314"/>
    <property type="project" value="UniProtKB"/>
</dbReference>
<dbReference type="GO" id="GO:0032753">
    <property type="term" value="P:positive regulation of interleukin-4 production"/>
    <property type="evidence" value="ECO:0000314"/>
    <property type="project" value="UniProtKB"/>
</dbReference>
<dbReference type="GO" id="GO:0042102">
    <property type="term" value="P:positive regulation of T cell proliferation"/>
    <property type="evidence" value="ECO:0000314"/>
    <property type="project" value="UniProtKB"/>
</dbReference>
<dbReference type="Gene3D" id="3.10.100.10">
    <property type="entry name" value="Mannose-Binding Protein A, subunit A"/>
    <property type="match status" value="1"/>
</dbReference>
<dbReference type="InterPro" id="IPR016186">
    <property type="entry name" value="C-type_lectin-like/link_sf"/>
</dbReference>
<dbReference type="InterPro" id="IPR051379">
    <property type="entry name" value="C-type_Lectin_Receptor_IMM"/>
</dbReference>
<dbReference type="InterPro" id="IPR016187">
    <property type="entry name" value="CTDL_fold"/>
</dbReference>
<dbReference type="PANTHER" id="PTHR46746:SF3">
    <property type="entry name" value="C-TYPE LECTIN DOMAIN-CONTAINING PROTEIN-RELATED"/>
    <property type="match status" value="1"/>
</dbReference>
<dbReference type="PANTHER" id="PTHR46746">
    <property type="entry name" value="KILLER CELL LECTIN-LIKE RECEPTOR SUBFAMILY F MEMBER 2"/>
    <property type="match status" value="1"/>
</dbReference>
<dbReference type="SUPFAM" id="SSF56436">
    <property type="entry name" value="C-type lectin-like"/>
    <property type="match status" value="1"/>
</dbReference>
<organism>
    <name type="scientific">Homo sapiens</name>
    <name type="common">Human</name>
    <dbReference type="NCBI Taxonomy" id="9606"/>
    <lineage>
        <taxon>Eukaryota</taxon>
        <taxon>Metazoa</taxon>
        <taxon>Chordata</taxon>
        <taxon>Craniata</taxon>
        <taxon>Vertebrata</taxon>
        <taxon>Euteleostomi</taxon>
        <taxon>Mammalia</taxon>
        <taxon>Eutheria</taxon>
        <taxon>Euarchontoglires</taxon>
        <taxon>Primates</taxon>
        <taxon>Haplorrhini</taxon>
        <taxon>Catarrhini</taxon>
        <taxon>Hominidae</taxon>
        <taxon>Homo</taxon>
    </lineage>
</organism>
<feature type="chain" id="PRO_0000317461" description="Putative C-type lectin-like domain family 1">
    <location>
        <begin position="1"/>
        <end position="167"/>
    </location>
</feature>
<feature type="topological domain" description="Cytoplasmic" evidence="1">
    <location>
        <begin position="1"/>
        <end position="67"/>
    </location>
</feature>
<feature type="transmembrane region" description="Helical; Signal-anchor for type II membrane protein" evidence="1">
    <location>
        <begin position="68"/>
        <end position="88"/>
    </location>
</feature>
<feature type="topological domain" description="Extracellular" evidence="1">
    <location>
        <begin position="89"/>
        <end position="167"/>
    </location>
</feature>
<feature type="domain" description="C-type lectin; atypical">
    <location>
        <begin position="116"/>
        <end position="167"/>
    </location>
</feature>
<feature type="glycosylation site" description="N-linked (GlcNAc...) asparagine" evidence="1">
    <location>
        <position position="109"/>
    </location>
</feature>
<feature type="glycosylation site" description="N-linked (GlcNAc...) asparagine" evidence="1">
    <location>
        <position position="140"/>
    </location>
</feature>
<feature type="glycosylation site" description="N-linked (GlcNAc...) asparagine" evidence="1">
    <location>
        <position position="149"/>
    </location>
</feature>
<name>CLCL1_HUMAN</name>
<keyword id="KW-1003">Cell membrane</keyword>
<keyword id="KW-0325">Glycoprotein</keyword>
<keyword id="KW-0430">Lectin</keyword>
<keyword id="KW-0472">Membrane</keyword>
<keyword id="KW-1267">Proteomics identification</keyword>
<keyword id="KW-1185">Reference proteome</keyword>
<keyword id="KW-0735">Signal-anchor</keyword>
<keyword id="KW-0812">Transmembrane</keyword>
<keyword id="KW-1133">Transmembrane helix</keyword>
<proteinExistence type="uncertain"/>
<protein>
    <recommendedName>
        <fullName evidence="4">Putative C-type lectin-like domain family 1</fullName>
    </recommendedName>
    <alternativeName>
        <fullName evidence="5">C-type lectin-like domain family 1 pseudogene</fullName>
    </alternativeName>
    <alternativeName>
        <fullName evidence="3">Dendritic cell-associated lectin 1</fullName>
        <shortName evidence="3">DC-associated lectin-1</shortName>
        <shortName evidence="3">DCAL-1</shortName>
    </alternativeName>
</protein>
<sequence>MVSNFFHVIQVFEKSATLISKTEHIGFVIYSWRKSTTHLGSRRKFAISIYLSEVSLQKYDCPFSGTSFVVFSLFLICAMAGDVVYADIKTVRTSPLELAFPLQRSVSFNFSTVHKSCPAKDWKVHKGKCYWIAETKKSWNKSQNDCAINNSYLMVIQDITAMVRFNI</sequence>
<accession>Q8IZS7</accession>
<evidence type="ECO:0000255" key="1"/>
<evidence type="ECO:0000269" key="2">
    <source>
    </source>
</evidence>
<evidence type="ECO:0000303" key="3">
    <source>
    </source>
</evidence>
<evidence type="ECO:0000305" key="4"/>
<evidence type="ECO:0000312" key="5">
    <source>
        <dbReference type="HGNC" id="HGNC:24462"/>
    </source>
</evidence>
<gene>
    <name evidence="5" type="primary">CLECL1P</name>
    <name evidence="5" type="synonym">CLECL1</name>
    <name evidence="3" type="synonym">DCAL1</name>
</gene>
<comment type="function">
    <text evidence="2">May function in mediating immune cell-cell interactions. May act as a T-cell costimulatory molecule, enhancing anti-CD3-induced proliferation. May play a role in the interaction of dendritic cells with T-cells and the cells of the adaptive immune response.</text>
</comment>
<comment type="subcellular location">
    <subcellularLocation>
        <location evidence="2">Cell membrane</location>
        <topology evidence="2">Single-pass type II membrane protein</topology>
    </subcellularLocation>
</comment>
<comment type="tissue specificity">
    <text evidence="2">Expressed in spleen, lymph node, and tonsil. Lower expression in peripheral blood, bone marrow, and colon. No expression detected in thymus. Highly expressed in dendritic and B-cells.</text>
</comment>
<comment type="caution">
    <text evidence="4">Could be the product of a pseudogene.</text>
</comment>